<comment type="function">
    <text evidence="1">May form complexes with phosphorylated ligands by interfering with kinases and their effectors.</text>
</comment>
<comment type="induction">
    <text evidence="2">Induced by abscisic acid (ABA).</text>
</comment>
<comment type="similarity">
    <text evidence="4">Belongs to the phosphatidylethanolamine-binding protein family.</text>
</comment>
<protein>
    <recommendedName>
        <fullName evidence="4">Protein MOTHER of FT and TFL1 homolog 2</fullName>
        <shortName evidence="3">OsMFT2</shortName>
    </recommendedName>
</protein>
<dbReference type="EMBL" id="AP002882">
    <property type="protein sequence ID" value="BAB39886.1"/>
    <property type="molecule type" value="Genomic_DNA"/>
</dbReference>
<dbReference type="EMBL" id="AP008207">
    <property type="protein sequence ID" value="BAF03720.1"/>
    <property type="molecule type" value="Genomic_DNA"/>
</dbReference>
<dbReference type="EMBL" id="AP014957">
    <property type="protein sequence ID" value="BAS70022.1"/>
    <property type="molecule type" value="Genomic_DNA"/>
</dbReference>
<dbReference type="EMBL" id="AK110620">
    <property type="protein sequence ID" value="BAG98997.1"/>
    <property type="molecule type" value="mRNA"/>
</dbReference>
<dbReference type="RefSeq" id="NP_001359127.1">
    <property type="nucleotide sequence ID" value="NM_001372198.1"/>
</dbReference>
<dbReference type="RefSeq" id="XP_015634874.1">
    <property type="nucleotide sequence ID" value="XM_015779388.1"/>
</dbReference>
<dbReference type="SMR" id="Q9ASJ1"/>
<dbReference type="FunCoup" id="Q9ASJ1">
    <property type="interactions" value="1439"/>
</dbReference>
<dbReference type="STRING" id="39947.Q9ASJ1"/>
<dbReference type="PaxDb" id="39947-Q9ASJ1"/>
<dbReference type="EnsemblPlants" id="Os01t0111600-01">
    <property type="protein sequence ID" value="Os01t0111600-01"/>
    <property type="gene ID" value="Os01g0111600"/>
</dbReference>
<dbReference type="GeneID" id="4326145"/>
<dbReference type="Gramene" id="Os01t0111600-01">
    <property type="protein sequence ID" value="Os01t0111600-01"/>
    <property type="gene ID" value="Os01g0111600"/>
</dbReference>
<dbReference type="KEGG" id="dosa:Os01g0111600"/>
<dbReference type="eggNOG" id="KOG3346">
    <property type="taxonomic scope" value="Eukaryota"/>
</dbReference>
<dbReference type="HOGENOM" id="CLU_043994_6_1_1"/>
<dbReference type="InParanoid" id="Q9ASJ1"/>
<dbReference type="OMA" id="GYIGSRP"/>
<dbReference type="OrthoDB" id="2506647at2759"/>
<dbReference type="Proteomes" id="UP000000763">
    <property type="component" value="Chromosome 1"/>
</dbReference>
<dbReference type="Proteomes" id="UP000059680">
    <property type="component" value="Chromosome 1"/>
</dbReference>
<dbReference type="CDD" id="cd00866">
    <property type="entry name" value="PEBP_euk"/>
    <property type="match status" value="1"/>
</dbReference>
<dbReference type="Gene3D" id="3.90.280.10">
    <property type="entry name" value="PEBP-like"/>
    <property type="match status" value="1"/>
</dbReference>
<dbReference type="InterPro" id="IPR008914">
    <property type="entry name" value="PEBP"/>
</dbReference>
<dbReference type="InterPro" id="IPR036610">
    <property type="entry name" value="PEBP-like_sf"/>
</dbReference>
<dbReference type="InterPro" id="IPR035810">
    <property type="entry name" value="PEBP_euk"/>
</dbReference>
<dbReference type="InterPro" id="IPR001858">
    <property type="entry name" value="Phosphatidylethanolamine-bd_CS"/>
</dbReference>
<dbReference type="PANTHER" id="PTHR11362">
    <property type="entry name" value="PHOSPHATIDYLETHANOLAMINE-BINDING PROTEIN"/>
    <property type="match status" value="1"/>
</dbReference>
<dbReference type="PANTHER" id="PTHR11362:SF42">
    <property type="entry name" value="PROTEIN MOTHER OF FT AND TFL1 HOMOLOG 2"/>
    <property type="match status" value="1"/>
</dbReference>
<dbReference type="Pfam" id="PF01161">
    <property type="entry name" value="PBP"/>
    <property type="match status" value="1"/>
</dbReference>
<dbReference type="SUPFAM" id="SSF49777">
    <property type="entry name" value="PEBP-like"/>
    <property type="match status" value="1"/>
</dbReference>
<dbReference type="PROSITE" id="PS01220">
    <property type="entry name" value="PBP"/>
    <property type="match status" value="1"/>
</dbReference>
<reference key="1">
    <citation type="journal article" date="2002" name="Nature">
        <title>The genome sequence and structure of rice chromosome 1.</title>
        <authorList>
            <person name="Sasaki T."/>
            <person name="Matsumoto T."/>
            <person name="Yamamoto K."/>
            <person name="Sakata K."/>
            <person name="Baba T."/>
            <person name="Katayose Y."/>
            <person name="Wu J."/>
            <person name="Niimura Y."/>
            <person name="Cheng Z."/>
            <person name="Nagamura Y."/>
            <person name="Antonio B.A."/>
            <person name="Kanamori H."/>
            <person name="Hosokawa S."/>
            <person name="Masukawa M."/>
            <person name="Arikawa K."/>
            <person name="Chiden Y."/>
            <person name="Hayashi M."/>
            <person name="Okamoto M."/>
            <person name="Ando T."/>
            <person name="Aoki H."/>
            <person name="Arita K."/>
            <person name="Hamada M."/>
            <person name="Harada C."/>
            <person name="Hijishita S."/>
            <person name="Honda M."/>
            <person name="Ichikawa Y."/>
            <person name="Idonuma A."/>
            <person name="Iijima M."/>
            <person name="Ikeda M."/>
            <person name="Ikeno M."/>
            <person name="Ito S."/>
            <person name="Ito T."/>
            <person name="Ito Y."/>
            <person name="Ito Y."/>
            <person name="Iwabuchi A."/>
            <person name="Kamiya K."/>
            <person name="Karasawa W."/>
            <person name="Katagiri S."/>
            <person name="Kikuta A."/>
            <person name="Kobayashi N."/>
            <person name="Kono I."/>
            <person name="Machita K."/>
            <person name="Maehara T."/>
            <person name="Mizuno H."/>
            <person name="Mizubayashi T."/>
            <person name="Mukai Y."/>
            <person name="Nagasaki H."/>
            <person name="Nakashima M."/>
            <person name="Nakama Y."/>
            <person name="Nakamichi Y."/>
            <person name="Nakamura M."/>
            <person name="Namiki N."/>
            <person name="Negishi M."/>
            <person name="Ohta I."/>
            <person name="Ono N."/>
            <person name="Saji S."/>
            <person name="Sakai K."/>
            <person name="Shibata M."/>
            <person name="Shimokawa T."/>
            <person name="Shomura A."/>
            <person name="Song J."/>
            <person name="Takazaki Y."/>
            <person name="Terasawa K."/>
            <person name="Tsuji K."/>
            <person name="Waki K."/>
            <person name="Yamagata H."/>
            <person name="Yamane H."/>
            <person name="Yoshiki S."/>
            <person name="Yoshihara R."/>
            <person name="Yukawa K."/>
            <person name="Zhong H."/>
            <person name="Iwama H."/>
            <person name="Endo T."/>
            <person name="Ito H."/>
            <person name="Hahn J.H."/>
            <person name="Kim H.-I."/>
            <person name="Eun M.-Y."/>
            <person name="Yano M."/>
            <person name="Jiang J."/>
            <person name="Gojobori T."/>
        </authorList>
    </citation>
    <scope>NUCLEOTIDE SEQUENCE [LARGE SCALE GENOMIC DNA]</scope>
    <source>
        <strain>cv. Nipponbare</strain>
    </source>
</reference>
<reference key="2">
    <citation type="journal article" date="2005" name="Nature">
        <title>The map-based sequence of the rice genome.</title>
        <authorList>
            <consortium name="International rice genome sequencing project (IRGSP)"/>
        </authorList>
    </citation>
    <scope>NUCLEOTIDE SEQUENCE [LARGE SCALE GENOMIC DNA]</scope>
    <source>
        <strain>cv. Nipponbare</strain>
    </source>
</reference>
<reference key="3">
    <citation type="journal article" date="2008" name="Nucleic Acids Res.">
        <title>The rice annotation project database (RAP-DB): 2008 update.</title>
        <authorList>
            <consortium name="The rice annotation project (RAP)"/>
        </authorList>
    </citation>
    <scope>GENOME REANNOTATION</scope>
    <source>
        <strain>cv. Nipponbare</strain>
    </source>
</reference>
<reference key="4">
    <citation type="journal article" date="2013" name="Rice">
        <title>Improvement of the Oryza sativa Nipponbare reference genome using next generation sequence and optical map data.</title>
        <authorList>
            <person name="Kawahara Y."/>
            <person name="de la Bastide M."/>
            <person name="Hamilton J.P."/>
            <person name="Kanamori H."/>
            <person name="McCombie W.R."/>
            <person name="Ouyang S."/>
            <person name="Schwartz D.C."/>
            <person name="Tanaka T."/>
            <person name="Wu J."/>
            <person name="Zhou S."/>
            <person name="Childs K.L."/>
            <person name="Davidson R.M."/>
            <person name="Lin H."/>
            <person name="Quesada-Ocampo L."/>
            <person name="Vaillancourt B."/>
            <person name="Sakai H."/>
            <person name="Lee S.S."/>
            <person name="Kim J."/>
            <person name="Numa H."/>
            <person name="Itoh T."/>
            <person name="Buell C.R."/>
            <person name="Matsumoto T."/>
        </authorList>
    </citation>
    <scope>GENOME REANNOTATION</scope>
    <source>
        <strain>cv. Nipponbare</strain>
    </source>
</reference>
<reference key="5">
    <citation type="journal article" date="2003" name="Science">
        <title>Collection, mapping, and annotation of over 28,000 cDNA clones from japonica rice.</title>
        <authorList>
            <consortium name="The rice full-length cDNA consortium"/>
        </authorList>
    </citation>
    <scope>NUCLEOTIDE SEQUENCE [LARGE SCALE MRNA]</scope>
    <source>
        <strain>cv. Nipponbare</strain>
    </source>
</reference>
<reference key="6">
    <citation type="journal article" date="2005" name="J. Mol. Evol.">
        <title>Phylogenomic analysis of the PEBP gene family in cereals.</title>
        <authorList>
            <person name="Chardon F."/>
            <person name="Damerval C."/>
        </authorList>
    </citation>
    <scope>GENE FAMILY</scope>
    <scope>NOMENCLATURE</scope>
</reference>
<reference key="7">
    <citation type="journal article" date="2014" name="PLoS Genet.">
        <title>Ethylene-induced inhibition of root growth requires abscisic acid function in rice (Oryza sativa L.) seedlings.</title>
        <authorList>
            <person name="Ma B."/>
            <person name="Yin C.C."/>
            <person name="He S.J."/>
            <person name="Lu X."/>
            <person name="Zhang W.K."/>
            <person name="Lu T.G."/>
            <person name="Chen S.Y."/>
            <person name="Zhang J.S."/>
        </authorList>
    </citation>
    <scope>INDUCTION BY ABSCISIC ACID</scope>
</reference>
<name>MFT2_ORYSJ</name>
<gene>
    <name evidence="3" type="primary">MFT2</name>
    <name evidence="6" type="ordered locus">Os01g0111600</name>
    <name evidence="4" type="ordered locus">LOC_Os01g02120</name>
    <name evidence="5" type="ORF">P0439B06.26</name>
</gene>
<evidence type="ECO:0000250" key="1">
    <source>
        <dbReference type="UniProtKB" id="P30086"/>
    </source>
</evidence>
<evidence type="ECO:0000269" key="2">
    <source>
    </source>
</evidence>
<evidence type="ECO:0000303" key="3">
    <source>
    </source>
</evidence>
<evidence type="ECO:0000305" key="4"/>
<evidence type="ECO:0000312" key="5">
    <source>
        <dbReference type="EMBL" id="BAB39886.1"/>
    </source>
</evidence>
<evidence type="ECO:0000312" key="6">
    <source>
        <dbReference type="EMBL" id="BAF03720.1"/>
    </source>
</evidence>
<sequence>MARFVDPLVVGRVIGEVVDLFVPSISMTAAYGDRDISNGCLVRPSAADYPPLVRISGRRNDLYTLIMTDPDAPSPSDPSMREFLHWIVVNIPGGTDASKGEEMVEYMGPRPTVGIHRYVLVLYEQKARFVDGALMPPADRPNFNTRAFAAYHQLGLPTAVVHFNSQREPANRRR</sequence>
<proteinExistence type="evidence at transcript level"/>
<keyword id="KW-1185">Reference proteome</keyword>
<organism>
    <name type="scientific">Oryza sativa subsp. japonica</name>
    <name type="common">Rice</name>
    <dbReference type="NCBI Taxonomy" id="39947"/>
    <lineage>
        <taxon>Eukaryota</taxon>
        <taxon>Viridiplantae</taxon>
        <taxon>Streptophyta</taxon>
        <taxon>Embryophyta</taxon>
        <taxon>Tracheophyta</taxon>
        <taxon>Spermatophyta</taxon>
        <taxon>Magnoliopsida</taxon>
        <taxon>Liliopsida</taxon>
        <taxon>Poales</taxon>
        <taxon>Poaceae</taxon>
        <taxon>BOP clade</taxon>
        <taxon>Oryzoideae</taxon>
        <taxon>Oryzeae</taxon>
        <taxon>Oryzinae</taxon>
        <taxon>Oryza</taxon>
        <taxon>Oryza sativa</taxon>
    </lineage>
</organism>
<feature type="chain" id="PRO_0000435894" description="Protein MOTHER of FT and TFL1 homolog 2">
    <location>
        <begin position="1"/>
        <end position="174"/>
    </location>
</feature>
<accession>Q9ASJ1</accession>